<reference key="1">
    <citation type="journal article" date="2001" name="Virology">
        <title>Analysis of the first complete DNA sequence of an invertebrate iridovirus: coding strategy of the genome of Chilo iridescent virus.</title>
        <authorList>
            <person name="Jakob N.J."/>
            <person name="Mueller K."/>
            <person name="Bahr U."/>
            <person name="Darai G."/>
        </authorList>
    </citation>
    <scope>NUCLEOTIDE SEQUENCE [LARGE SCALE GENOMIC DNA]</scope>
</reference>
<reference key="2">
    <citation type="journal article" date="2007" name="Virol. J.">
        <title>Comparative genomic analysis of the family Iridoviridae: re-annotating and defining the core set of iridovirus genes.</title>
        <authorList>
            <person name="Eaton H.E."/>
            <person name="Metcalf J."/>
            <person name="Penny E."/>
            <person name="Tcherepanov V."/>
            <person name="Upton C."/>
            <person name="Brunetti C.R."/>
        </authorList>
    </citation>
    <scope>GENOME REANNOTATION</scope>
</reference>
<keyword id="KW-1185">Reference proteome</keyword>
<protein>
    <recommendedName>
        <fullName>Uncharacterized protein 451L</fullName>
    </recommendedName>
</protein>
<proteinExistence type="predicted"/>
<organism>
    <name type="scientific">Invertebrate iridescent virus 6</name>
    <name type="common">IIV-6</name>
    <name type="synonym">Chilo iridescent virus</name>
    <dbReference type="NCBI Taxonomy" id="176652"/>
    <lineage>
        <taxon>Viruses</taxon>
        <taxon>Varidnaviria</taxon>
        <taxon>Bamfordvirae</taxon>
        <taxon>Nucleocytoviricota</taxon>
        <taxon>Megaviricetes</taxon>
        <taxon>Pimascovirales</taxon>
        <taxon>Iridoviridae</taxon>
        <taxon>Betairidovirinae</taxon>
        <taxon>Iridovirus</taxon>
    </lineage>
</organism>
<organismHost>
    <name type="scientific">Acheta domesticus</name>
    <name type="common">House cricket</name>
    <dbReference type="NCBI Taxonomy" id="6997"/>
</organismHost>
<organismHost>
    <name type="scientific">Chilo suppressalis</name>
    <name type="common">Asiatic rice borer moth</name>
    <dbReference type="NCBI Taxonomy" id="168631"/>
</organismHost>
<organismHost>
    <name type="scientific">Gryllus bimaculatus</name>
    <name type="common">Two-spotted cricket</name>
    <dbReference type="NCBI Taxonomy" id="6999"/>
</organismHost>
<organismHost>
    <name type="scientific">Gryllus campestris</name>
    <dbReference type="NCBI Taxonomy" id="58607"/>
</organismHost>
<organismHost>
    <name type="scientific">Spodoptera frugiperda</name>
    <name type="common">Fall armyworm</name>
    <dbReference type="NCBI Taxonomy" id="7108"/>
</organismHost>
<sequence>MNKIYVKKGDKNTQVGDKIDEIEVTFRCKGGPIGEVGTFFGKVVSKILFAKSLYTICEKGKIKKIKKTIELEKSDIDAIMLLFSDEDFNPDDSDDLQIDEPDCNGTWTLIKIISVYTPIDEKDNYDFYV</sequence>
<dbReference type="EMBL" id="AF303741">
    <property type="protein sequence ID" value="AAK82311.1"/>
    <property type="molecule type" value="Genomic_DNA"/>
</dbReference>
<dbReference type="RefSeq" id="NP_149914.1">
    <property type="nucleotide sequence ID" value="NC_003038.1"/>
</dbReference>
<dbReference type="KEGG" id="vg:1733023"/>
<dbReference type="OrthoDB" id="39127at10239"/>
<dbReference type="Proteomes" id="UP000001359">
    <property type="component" value="Genome"/>
</dbReference>
<gene>
    <name type="ORF">IIV6-451L</name>
</gene>
<name>451L_IIV6</name>
<feature type="chain" id="PRO_0000377893" description="Uncharacterized protein 451L">
    <location>
        <begin position="1"/>
        <end position="129"/>
    </location>
</feature>
<accession>Q91F75</accession>